<reference key="1">
    <citation type="journal article" date="2006" name="Proc. Natl. Acad. Sci. U.S.A.">
        <title>Molecular genetic anatomy of inter- and intraserotype variation in the human bacterial pathogen group A Streptococcus.</title>
        <authorList>
            <person name="Beres S.B."/>
            <person name="Richter E.W."/>
            <person name="Nagiec M.J."/>
            <person name="Sumby P."/>
            <person name="Porcella S.F."/>
            <person name="DeLeo F.R."/>
            <person name="Musser J.M."/>
        </authorList>
    </citation>
    <scope>NUCLEOTIDE SEQUENCE [LARGE SCALE GENOMIC DNA]</scope>
    <source>
        <strain>MGAS10270</strain>
    </source>
</reference>
<accession>Q1JH84</accession>
<keyword id="KW-0963">Cytoplasm</keyword>
<keyword id="KW-0328">Glycosyltransferase</keyword>
<keyword id="KW-0660">Purine salvage</keyword>
<keyword id="KW-0808">Transferase</keyword>
<comment type="function">
    <text evidence="1">Catalyzes a salvage reaction resulting in the formation of AMP, that is energically less costly than de novo synthesis.</text>
</comment>
<comment type="catalytic activity">
    <reaction evidence="1">
        <text>AMP + diphosphate = 5-phospho-alpha-D-ribose 1-diphosphate + adenine</text>
        <dbReference type="Rhea" id="RHEA:16609"/>
        <dbReference type="ChEBI" id="CHEBI:16708"/>
        <dbReference type="ChEBI" id="CHEBI:33019"/>
        <dbReference type="ChEBI" id="CHEBI:58017"/>
        <dbReference type="ChEBI" id="CHEBI:456215"/>
        <dbReference type="EC" id="2.4.2.7"/>
    </reaction>
</comment>
<comment type="pathway">
    <text evidence="1">Purine metabolism; AMP biosynthesis via salvage pathway; AMP from adenine: step 1/1.</text>
</comment>
<comment type="subunit">
    <text evidence="1">Homodimer.</text>
</comment>
<comment type="subcellular location">
    <subcellularLocation>
        <location evidence="1">Cytoplasm</location>
    </subcellularLocation>
</comment>
<comment type="similarity">
    <text evidence="1">Belongs to the purine/pyrimidine phosphoribosyltransferase family.</text>
</comment>
<evidence type="ECO:0000255" key="1">
    <source>
        <dbReference type="HAMAP-Rule" id="MF_00004"/>
    </source>
</evidence>
<feature type="chain" id="PRO_1000000354" description="Adenine phosphoribosyltransferase">
    <location>
        <begin position="1"/>
        <end position="172"/>
    </location>
</feature>
<organism>
    <name type="scientific">Streptococcus pyogenes serotype M2 (strain MGAS10270)</name>
    <dbReference type="NCBI Taxonomy" id="370552"/>
    <lineage>
        <taxon>Bacteria</taxon>
        <taxon>Bacillati</taxon>
        <taxon>Bacillota</taxon>
        <taxon>Bacilli</taxon>
        <taxon>Lactobacillales</taxon>
        <taxon>Streptococcaceae</taxon>
        <taxon>Streptococcus</taxon>
    </lineage>
</organism>
<dbReference type="EC" id="2.4.2.7" evidence="1"/>
<dbReference type="EMBL" id="CP000260">
    <property type="protein sequence ID" value="ABF33852.1"/>
    <property type="molecule type" value="Genomic_DNA"/>
</dbReference>
<dbReference type="RefSeq" id="WP_002990109.1">
    <property type="nucleotide sequence ID" value="NZ_CVUH01000002.1"/>
</dbReference>
<dbReference type="SMR" id="Q1JH84"/>
<dbReference type="KEGG" id="sph:MGAS10270_Spy0787"/>
<dbReference type="HOGENOM" id="CLU_063339_3_0_9"/>
<dbReference type="UniPathway" id="UPA00588">
    <property type="reaction ID" value="UER00646"/>
</dbReference>
<dbReference type="Proteomes" id="UP000002436">
    <property type="component" value="Chromosome"/>
</dbReference>
<dbReference type="GO" id="GO:0005737">
    <property type="term" value="C:cytoplasm"/>
    <property type="evidence" value="ECO:0007669"/>
    <property type="project" value="UniProtKB-SubCell"/>
</dbReference>
<dbReference type="GO" id="GO:0002055">
    <property type="term" value="F:adenine binding"/>
    <property type="evidence" value="ECO:0007669"/>
    <property type="project" value="TreeGrafter"/>
</dbReference>
<dbReference type="GO" id="GO:0003999">
    <property type="term" value="F:adenine phosphoribosyltransferase activity"/>
    <property type="evidence" value="ECO:0007669"/>
    <property type="project" value="UniProtKB-UniRule"/>
</dbReference>
<dbReference type="GO" id="GO:0016208">
    <property type="term" value="F:AMP binding"/>
    <property type="evidence" value="ECO:0007669"/>
    <property type="project" value="TreeGrafter"/>
</dbReference>
<dbReference type="GO" id="GO:0006168">
    <property type="term" value="P:adenine salvage"/>
    <property type="evidence" value="ECO:0007669"/>
    <property type="project" value="InterPro"/>
</dbReference>
<dbReference type="GO" id="GO:0044209">
    <property type="term" value="P:AMP salvage"/>
    <property type="evidence" value="ECO:0007669"/>
    <property type="project" value="UniProtKB-UniRule"/>
</dbReference>
<dbReference type="GO" id="GO:0006166">
    <property type="term" value="P:purine ribonucleoside salvage"/>
    <property type="evidence" value="ECO:0007669"/>
    <property type="project" value="UniProtKB-KW"/>
</dbReference>
<dbReference type="CDD" id="cd06223">
    <property type="entry name" value="PRTases_typeI"/>
    <property type="match status" value="1"/>
</dbReference>
<dbReference type="FunFam" id="3.40.50.2020:FF:000004">
    <property type="entry name" value="Adenine phosphoribosyltransferase"/>
    <property type="match status" value="1"/>
</dbReference>
<dbReference type="Gene3D" id="3.40.50.2020">
    <property type="match status" value="1"/>
</dbReference>
<dbReference type="HAMAP" id="MF_00004">
    <property type="entry name" value="Aden_phosphoribosyltr"/>
    <property type="match status" value="1"/>
</dbReference>
<dbReference type="InterPro" id="IPR005764">
    <property type="entry name" value="Ade_phspho_trans"/>
</dbReference>
<dbReference type="InterPro" id="IPR000836">
    <property type="entry name" value="PRibTrfase_dom"/>
</dbReference>
<dbReference type="InterPro" id="IPR029057">
    <property type="entry name" value="PRTase-like"/>
</dbReference>
<dbReference type="InterPro" id="IPR050054">
    <property type="entry name" value="UPRTase/APRTase"/>
</dbReference>
<dbReference type="NCBIfam" id="TIGR01090">
    <property type="entry name" value="apt"/>
    <property type="match status" value="1"/>
</dbReference>
<dbReference type="NCBIfam" id="NF002633">
    <property type="entry name" value="PRK02304.1-2"/>
    <property type="match status" value="1"/>
</dbReference>
<dbReference type="NCBIfam" id="NF002634">
    <property type="entry name" value="PRK02304.1-3"/>
    <property type="match status" value="1"/>
</dbReference>
<dbReference type="NCBIfam" id="NF002636">
    <property type="entry name" value="PRK02304.1-5"/>
    <property type="match status" value="1"/>
</dbReference>
<dbReference type="PANTHER" id="PTHR32315">
    <property type="entry name" value="ADENINE PHOSPHORIBOSYLTRANSFERASE"/>
    <property type="match status" value="1"/>
</dbReference>
<dbReference type="PANTHER" id="PTHR32315:SF3">
    <property type="entry name" value="ADENINE PHOSPHORIBOSYLTRANSFERASE"/>
    <property type="match status" value="1"/>
</dbReference>
<dbReference type="Pfam" id="PF00156">
    <property type="entry name" value="Pribosyltran"/>
    <property type="match status" value="1"/>
</dbReference>
<dbReference type="SUPFAM" id="SSF53271">
    <property type="entry name" value="PRTase-like"/>
    <property type="match status" value="1"/>
</dbReference>
<dbReference type="PROSITE" id="PS00103">
    <property type="entry name" value="PUR_PYR_PR_TRANSFER"/>
    <property type="match status" value="1"/>
</dbReference>
<name>APT_STRPD</name>
<protein>
    <recommendedName>
        <fullName evidence="1">Adenine phosphoribosyltransferase</fullName>
        <shortName evidence="1">APRT</shortName>
        <ecNumber evidence="1">2.4.2.7</ecNumber>
    </recommendedName>
</protein>
<sequence length="172" mass="18687">MDLTNYIASIKDYPKAGITFRDISPLMADGKAYSYAIREIAQYACDKDIDMVVGPEARGFIIGCPVAVELGIGFAPVRKPGKLPRDVVSADYEKEYGLDTLTMHADAIKPGQRVLIVDDLLATGGTVKATIEMIEKLGGIVAGCAFLIELEGLNGRHAIRNYDYKVLMQFPG</sequence>
<gene>
    <name evidence="1" type="primary">apt</name>
    <name type="ordered locus">MGAS10270_Spy0787</name>
</gene>
<proteinExistence type="inferred from homology"/>